<accession>A0A023W123</accession>
<evidence type="ECO:0000255" key="1"/>
<evidence type="ECO:0000269" key="2">
    <source>
    </source>
</evidence>
<evidence type="ECO:0000303" key="3">
    <source>
    </source>
</evidence>
<evidence type="ECO:0000305" key="4"/>
<evidence type="ECO:0000305" key="5">
    <source>
    </source>
</evidence>
<evidence type="ECO:0000312" key="6">
    <source>
        <dbReference type="EMBL" id="AHY22575.1"/>
    </source>
</evidence>
<feature type="signal peptide" evidence="1">
    <location>
        <begin position="1"/>
        <end position="24"/>
    </location>
</feature>
<feature type="propeptide" id="PRO_0000446697" evidence="5">
    <location>
        <begin position="25"/>
        <end position="28"/>
    </location>
</feature>
<feature type="peptide" id="PRO_5007368295" description="U-scoloptoxin-Er1.1a" evidence="2">
    <location>
        <begin position="29"/>
        <end position="46"/>
    </location>
</feature>
<feature type="chain" id="PRO_0000446698" description="U-scoloptoxin-Er1.2a" evidence="2">
    <location>
        <begin position="47"/>
        <end position="77"/>
    </location>
</feature>
<sequence length="78" mass="8829">MTRHLIFAAVLLVCLFVCWNAIGAQDARSAFSSEETAQDQHVMEERIFINPAGNREKNACLENCRSSPNCKNYEFCSK</sequence>
<reference key="1">
    <citation type="journal article" date="2014" name="J. Proteomics">
        <title>Multifunctional warheads: diversification of the toxin arsenal of centipedes via novel multidomain transcripts.</title>
        <authorList>
            <person name="Undheim E.A."/>
            <person name="Sunagar K."/>
            <person name="Hamilton B.R."/>
            <person name="Jones A."/>
            <person name="Venter D.J."/>
            <person name="Fry B.G."/>
            <person name="King G.F."/>
        </authorList>
    </citation>
    <scope>NUCLEOTIDE SEQUENCE [MRNA]</scope>
    <scope>PROTEIN SEQUENCE OF 29-46 AND 47-77</scope>
    <scope>IDENTIFICATION BY MASS SPECTROMETRY</scope>
    <scope>SUBCELLULAR LOCATION</scope>
    <source>
        <tissue>Venom</tissue>
        <tissue>Venom gland</tissue>
    </source>
</reference>
<protein>
    <recommendedName>
        <fullName evidence="4">U-scoloptoxin(04)-Er1a</fullName>
        <shortName evidence="4">U-SLPTX(04)-Er1a</shortName>
    </recommendedName>
    <alternativeName>
        <fullName evidence="6">U-scoloptoxin-Er1.1a2a</fullName>
        <shortName evidence="6">U-SLPTX-Er1.1a2a</shortName>
    </alternativeName>
    <component>
        <recommendedName>
            <fullName evidence="3">U-scoloptoxin-Er1.1a</fullName>
        </recommendedName>
    </component>
    <component>
        <recommendedName>
            <fullName evidence="3">U-scoloptoxin-Er1.2a</fullName>
        </recommendedName>
    </component>
</protein>
<proteinExistence type="evidence at protein level"/>
<organism>
    <name type="scientific">Ethmostigmus rubripes</name>
    <name type="common">Giant centipede</name>
    <dbReference type="NCBI Taxonomy" id="62613"/>
    <lineage>
        <taxon>Eukaryota</taxon>
        <taxon>Metazoa</taxon>
        <taxon>Ecdysozoa</taxon>
        <taxon>Arthropoda</taxon>
        <taxon>Myriapoda</taxon>
        <taxon>Chilopoda</taxon>
        <taxon>Pleurostigmophora</taxon>
        <taxon>Scolopendromorpha</taxon>
        <taxon>Scolopendridae</taxon>
        <taxon>Ethmostigmus</taxon>
    </lineage>
</organism>
<keyword id="KW-0903">Direct protein sequencing</keyword>
<keyword id="KW-1015">Disulfide bond</keyword>
<keyword id="KW-0964">Secreted</keyword>
<keyword id="KW-0732">Signal</keyword>
<keyword id="KW-0800">Toxin</keyword>
<name>TX41A_ETHRU</name>
<dbReference type="EMBL" id="KF130724">
    <property type="protein sequence ID" value="AHY22575.1"/>
    <property type="molecule type" value="mRNA"/>
</dbReference>
<dbReference type="EMBL" id="KF130728">
    <property type="protein sequence ID" value="AHY22579.1"/>
    <property type="molecule type" value="mRNA"/>
</dbReference>
<dbReference type="GO" id="GO:0005576">
    <property type="term" value="C:extracellular region"/>
    <property type="evidence" value="ECO:0007669"/>
    <property type="project" value="UniProtKB-SubCell"/>
</dbReference>
<dbReference type="GO" id="GO:0090729">
    <property type="term" value="F:toxin activity"/>
    <property type="evidence" value="ECO:0007669"/>
    <property type="project" value="UniProtKB-KW"/>
</dbReference>
<comment type="subcellular location">
    <subcellularLocation>
        <location evidence="2">Secreted</location>
    </subcellularLocation>
    <text evidence="2">The mature toxins are clearly liberated from the multidomain precursors in the venom gland prior to venom expulsion and not by venom proteases upon secretion.</text>
</comment>
<comment type="tissue specificity">
    <text evidence="5">Expressed by the venom gland.</text>
</comment>
<comment type="PTM">
    <text evidence="4">Contains 2 disulfide bonds.</text>
</comment>
<comment type="similarity">
    <text evidence="4">Belongs to the scoloptoxin-04 family.</text>
</comment>